<evidence type="ECO:0000255" key="1">
    <source>
        <dbReference type="HAMAP-Rule" id="MF_00527"/>
    </source>
</evidence>
<name>3MGH_RICBR</name>
<organism>
    <name type="scientific">Rickettsia bellii (strain RML369-C)</name>
    <dbReference type="NCBI Taxonomy" id="336407"/>
    <lineage>
        <taxon>Bacteria</taxon>
        <taxon>Pseudomonadati</taxon>
        <taxon>Pseudomonadota</taxon>
        <taxon>Alphaproteobacteria</taxon>
        <taxon>Rickettsiales</taxon>
        <taxon>Rickettsiaceae</taxon>
        <taxon>Rickettsieae</taxon>
        <taxon>Rickettsia</taxon>
        <taxon>belli group</taxon>
    </lineage>
</organism>
<feature type="chain" id="PRO_0000265054" description="Putative 3-methyladenine DNA glycosylase">
    <location>
        <begin position="1"/>
        <end position="220"/>
    </location>
</feature>
<gene>
    <name type="ordered locus">RBE_0390</name>
</gene>
<keyword id="KW-0227">DNA damage</keyword>
<keyword id="KW-0234">DNA repair</keyword>
<keyword id="KW-0378">Hydrolase</keyword>
<accession>Q1RJJ3</accession>
<dbReference type="EC" id="3.2.2.-" evidence="1"/>
<dbReference type="EMBL" id="CP000087">
    <property type="protein sequence ID" value="ABE04471.1"/>
    <property type="molecule type" value="Genomic_DNA"/>
</dbReference>
<dbReference type="RefSeq" id="WP_011477080.1">
    <property type="nucleotide sequence ID" value="NC_007940.1"/>
</dbReference>
<dbReference type="SMR" id="Q1RJJ3"/>
<dbReference type="KEGG" id="rbe:RBE_0390"/>
<dbReference type="eggNOG" id="COG2094">
    <property type="taxonomic scope" value="Bacteria"/>
</dbReference>
<dbReference type="HOGENOM" id="CLU_060471_3_0_5"/>
<dbReference type="OrthoDB" id="9794313at2"/>
<dbReference type="Proteomes" id="UP000001951">
    <property type="component" value="Chromosome"/>
</dbReference>
<dbReference type="GO" id="GO:0003905">
    <property type="term" value="F:alkylbase DNA N-glycosylase activity"/>
    <property type="evidence" value="ECO:0007669"/>
    <property type="project" value="InterPro"/>
</dbReference>
<dbReference type="GO" id="GO:0003677">
    <property type="term" value="F:DNA binding"/>
    <property type="evidence" value="ECO:0007669"/>
    <property type="project" value="InterPro"/>
</dbReference>
<dbReference type="GO" id="GO:0006284">
    <property type="term" value="P:base-excision repair"/>
    <property type="evidence" value="ECO:0007669"/>
    <property type="project" value="InterPro"/>
</dbReference>
<dbReference type="CDD" id="cd00540">
    <property type="entry name" value="AAG"/>
    <property type="match status" value="1"/>
</dbReference>
<dbReference type="Gene3D" id="3.10.300.10">
    <property type="entry name" value="Methylpurine-DNA glycosylase (MPG)"/>
    <property type="match status" value="1"/>
</dbReference>
<dbReference type="HAMAP" id="MF_00527">
    <property type="entry name" value="3MGH"/>
    <property type="match status" value="1"/>
</dbReference>
<dbReference type="InterPro" id="IPR011034">
    <property type="entry name" value="Formyl_transferase-like_C_sf"/>
</dbReference>
<dbReference type="InterPro" id="IPR003180">
    <property type="entry name" value="MPG"/>
</dbReference>
<dbReference type="InterPro" id="IPR036995">
    <property type="entry name" value="MPG_sf"/>
</dbReference>
<dbReference type="InterPro" id="IPR022438">
    <property type="entry name" value="RPE5"/>
</dbReference>
<dbReference type="NCBIfam" id="TIGR00567">
    <property type="entry name" value="3mg"/>
    <property type="match status" value="1"/>
</dbReference>
<dbReference type="NCBIfam" id="NF002004">
    <property type="entry name" value="PRK00802.1-4"/>
    <property type="match status" value="1"/>
</dbReference>
<dbReference type="NCBIfam" id="TIGR03776">
    <property type="entry name" value="RPE5"/>
    <property type="match status" value="1"/>
</dbReference>
<dbReference type="PANTHER" id="PTHR10429">
    <property type="entry name" value="DNA-3-METHYLADENINE GLYCOSYLASE"/>
    <property type="match status" value="1"/>
</dbReference>
<dbReference type="PANTHER" id="PTHR10429:SF0">
    <property type="entry name" value="DNA-3-METHYLADENINE GLYCOSYLASE"/>
    <property type="match status" value="1"/>
</dbReference>
<dbReference type="Pfam" id="PF02245">
    <property type="entry name" value="Pur_DNA_glyco"/>
    <property type="match status" value="1"/>
</dbReference>
<dbReference type="SUPFAM" id="SSF50486">
    <property type="entry name" value="FMT C-terminal domain-like"/>
    <property type="match status" value="1"/>
</dbReference>
<comment type="similarity">
    <text evidence="1">Belongs to the DNA glycosylase MPG family.</text>
</comment>
<sequence>MNNKLIPLSREFFARDTNIVSQELLGKVLYFQGKTAIITETESYIGQDDPACHAARGRTKRTDIMFGPAGFSYVYLIYGMYYCLNFVTETDGFPAATLIRGAYIISTKDLYTADTSKVGSQISGETARRILIREHRRIPKFDVPNLEVSKVDGPGKLCKYLGINISHNKIDLINNNEFFVSDINLKLPYSTTTRIGITKGIDKLWRYVVTNPIDLTKISF</sequence>
<proteinExistence type="inferred from homology"/>
<protein>
    <recommendedName>
        <fullName evidence="1">Putative 3-methyladenine DNA glycosylase</fullName>
        <ecNumber evidence="1">3.2.2.-</ecNumber>
    </recommendedName>
</protein>
<reference key="1">
    <citation type="journal article" date="2006" name="PLoS Genet.">
        <title>Genome sequence of Rickettsia bellii illuminates the role of amoebae in gene exchanges between intracellular pathogens.</title>
        <authorList>
            <person name="Ogata H."/>
            <person name="La Scola B."/>
            <person name="Audic S."/>
            <person name="Renesto P."/>
            <person name="Blanc G."/>
            <person name="Robert C."/>
            <person name="Fournier P.-E."/>
            <person name="Claverie J.-M."/>
            <person name="Raoult D."/>
        </authorList>
    </citation>
    <scope>NUCLEOTIDE SEQUENCE [LARGE SCALE GENOMIC DNA]</scope>
    <source>
        <strain>RML369-C</strain>
    </source>
</reference>